<comment type="function">
    <text evidence="1">Catalyzes the reversible phosphorylation of UMP to UDP.</text>
</comment>
<comment type="catalytic activity">
    <reaction evidence="1">
        <text>UMP + ATP = UDP + ADP</text>
        <dbReference type="Rhea" id="RHEA:24400"/>
        <dbReference type="ChEBI" id="CHEBI:30616"/>
        <dbReference type="ChEBI" id="CHEBI:57865"/>
        <dbReference type="ChEBI" id="CHEBI:58223"/>
        <dbReference type="ChEBI" id="CHEBI:456216"/>
        <dbReference type="EC" id="2.7.4.22"/>
    </reaction>
</comment>
<comment type="activity regulation">
    <text evidence="1">Inhibited by UTP.</text>
</comment>
<comment type="pathway">
    <text evidence="1">Pyrimidine metabolism; CTP biosynthesis via de novo pathway; UDP from UMP (UMPK route): step 1/1.</text>
</comment>
<comment type="subunit">
    <text evidence="1">Homohexamer.</text>
</comment>
<comment type="subcellular location">
    <subcellularLocation>
        <location evidence="1">Cytoplasm</location>
    </subcellularLocation>
</comment>
<comment type="similarity">
    <text evidence="1">Belongs to the UMP kinase family.</text>
</comment>
<comment type="sequence caution" evidence="2">
    <conflict type="erroneous initiation">
        <sequence resource="EMBL-CDS" id="ABC36862"/>
    </conflict>
</comment>
<organism>
    <name type="scientific">Burkholderia thailandensis (strain ATCC 700388 / DSM 13276 / CCUG 48851 / CIP 106301 / E264)</name>
    <dbReference type="NCBI Taxonomy" id="271848"/>
    <lineage>
        <taxon>Bacteria</taxon>
        <taxon>Pseudomonadati</taxon>
        <taxon>Pseudomonadota</taxon>
        <taxon>Betaproteobacteria</taxon>
        <taxon>Burkholderiales</taxon>
        <taxon>Burkholderiaceae</taxon>
        <taxon>Burkholderia</taxon>
        <taxon>pseudomallei group</taxon>
    </lineage>
</organism>
<keyword id="KW-0067">ATP-binding</keyword>
<keyword id="KW-0963">Cytoplasm</keyword>
<keyword id="KW-0418">Kinase</keyword>
<keyword id="KW-0547">Nucleotide-binding</keyword>
<keyword id="KW-0665">Pyrimidine biosynthesis</keyword>
<keyword id="KW-0808">Transferase</keyword>
<name>PYRH_BURTA</name>
<accession>Q2SWZ6</accession>
<reference key="1">
    <citation type="journal article" date="2005" name="BMC Genomics">
        <title>Bacterial genome adaptation to niches: divergence of the potential virulence genes in three Burkholderia species of different survival strategies.</title>
        <authorList>
            <person name="Kim H.S."/>
            <person name="Schell M.A."/>
            <person name="Yu Y."/>
            <person name="Ulrich R.L."/>
            <person name="Sarria S.H."/>
            <person name="Nierman W.C."/>
            <person name="DeShazer D."/>
        </authorList>
    </citation>
    <scope>NUCLEOTIDE SEQUENCE [LARGE SCALE GENOMIC DNA]</scope>
    <source>
        <strain>ATCC 700388 / DSM 13276 / CCUG 48851 / CIP 106301 / E264</strain>
    </source>
</reference>
<proteinExistence type="inferred from homology"/>
<evidence type="ECO:0000255" key="1">
    <source>
        <dbReference type="HAMAP-Rule" id="MF_01220"/>
    </source>
</evidence>
<evidence type="ECO:0000305" key="2"/>
<dbReference type="EC" id="2.7.4.22" evidence="1"/>
<dbReference type="EMBL" id="CP000086">
    <property type="protein sequence ID" value="ABC36862.1"/>
    <property type="status" value="ALT_INIT"/>
    <property type="molecule type" value="Genomic_DNA"/>
</dbReference>
<dbReference type="RefSeq" id="WP_009890442.1">
    <property type="nucleotide sequence ID" value="NZ_CP008785.1"/>
</dbReference>
<dbReference type="SMR" id="Q2SWZ6"/>
<dbReference type="GeneID" id="45121757"/>
<dbReference type="KEGG" id="bte:BTH_I2029"/>
<dbReference type="HOGENOM" id="CLU_033861_0_0_4"/>
<dbReference type="UniPathway" id="UPA00159">
    <property type="reaction ID" value="UER00275"/>
</dbReference>
<dbReference type="Proteomes" id="UP000001930">
    <property type="component" value="Chromosome I"/>
</dbReference>
<dbReference type="GO" id="GO:0005829">
    <property type="term" value="C:cytosol"/>
    <property type="evidence" value="ECO:0007669"/>
    <property type="project" value="TreeGrafter"/>
</dbReference>
<dbReference type="GO" id="GO:0005524">
    <property type="term" value="F:ATP binding"/>
    <property type="evidence" value="ECO:0007669"/>
    <property type="project" value="UniProtKB-KW"/>
</dbReference>
<dbReference type="GO" id="GO:0033862">
    <property type="term" value="F:UMP kinase activity"/>
    <property type="evidence" value="ECO:0007669"/>
    <property type="project" value="UniProtKB-EC"/>
</dbReference>
<dbReference type="GO" id="GO:0044210">
    <property type="term" value="P:'de novo' CTP biosynthetic process"/>
    <property type="evidence" value="ECO:0007669"/>
    <property type="project" value="UniProtKB-UniRule"/>
</dbReference>
<dbReference type="GO" id="GO:0006225">
    <property type="term" value="P:UDP biosynthetic process"/>
    <property type="evidence" value="ECO:0007669"/>
    <property type="project" value="TreeGrafter"/>
</dbReference>
<dbReference type="CDD" id="cd04254">
    <property type="entry name" value="AAK_UMPK-PyrH-Ec"/>
    <property type="match status" value="1"/>
</dbReference>
<dbReference type="FunFam" id="3.40.1160.10:FF:000001">
    <property type="entry name" value="Uridylate kinase"/>
    <property type="match status" value="1"/>
</dbReference>
<dbReference type="Gene3D" id="3.40.1160.10">
    <property type="entry name" value="Acetylglutamate kinase-like"/>
    <property type="match status" value="1"/>
</dbReference>
<dbReference type="HAMAP" id="MF_01220_B">
    <property type="entry name" value="PyrH_B"/>
    <property type="match status" value="1"/>
</dbReference>
<dbReference type="InterPro" id="IPR036393">
    <property type="entry name" value="AceGlu_kinase-like_sf"/>
</dbReference>
<dbReference type="InterPro" id="IPR001048">
    <property type="entry name" value="Asp/Glu/Uridylate_kinase"/>
</dbReference>
<dbReference type="InterPro" id="IPR011817">
    <property type="entry name" value="Uridylate_kinase"/>
</dbReference>
<dbReference type="InterPro" id="IPR015963">
    <property type="entry name" value="Uridylate_kinase_bac"/>
</dbReference>
<dbReference type="NCBIfam" id="TIGR02075">
    <property type="entry name" value="pyrH_bact"/>
    <property type="match status" value="1"/>
</dbReference>
<dbReference type="PANTHER" id="PTHR42833">
    <property type="entry name" value="URIDYLATE KINASE"/>
    <property type="match status" value="1"/>
</dbReference>
<dbReference type="PANTHER" id="PTHR42833:SF4">
    <property type="entry name" value="URIDYLATE KINASE PUMPKIN, CHLOROPLASTIC"/>
    <property type="match status" value="1"/>
</dbReference>
<dbReference type="Pfam" id="PF00696">
    <property type="entry name" value="AA_kinase"/>
    <property type="match status" value="1"/>
</dbReference>
<dbReference type="PIRSF" id="PIRSF005650">
    <property type="entry name" value="Uridylate_kin"/>
    <property type="match status" value="1"/>
</dbReference>
<dbReference type="SUPFAM" id="SSF53633">
    <property type="entry name" value="Carbamate kinase-like"/>
    <property type="match status" value="1"/>
</dbReference>
<protein>
    <recommendedName>
        <fullName evidence="1">Uridylate kinase</fullName>
        <shortName evidence="1">UK</shortName>
        <ecNumber evidence="1">2.7.4.22</ecNumber>
    </recommendedName>
    <alternativeName>
        <fullName evidence="1">Uridine monophosphate kinase</fullName>
        <shortName evidence="1">UMP kinase</shortName>
        <shortName evidence="1">UMPK</shortName>
    </alternativeName>
</protein>
<feature type="chain" id="PRO_0000323817" description="Uridylate kinase">
    <location>
        <begin position="1"/>
        <end position="237"/>
    </location>
</feature>
<feature type="binding site" evidence="1">
    <location>
        <begin position="11"/>
        <end position="14"/>
    </location>
    <ligand>
        <name>ATP</name>
        <dbReference type="ChEBI" id="CHEBI:30616"/>
    </ligand>
</feature>
<feature type="binding site" evidence="1">
    <location>
        <position position="53"/>
    </location>
    <ligand>
        <name>UMP</name>
        <dbReference type="ChEBI" id="CHEBI:57865"/>
    </ligand>
</feature>
<feature type="binding site" evidence="1">
    <location>
        <position position="54"/>
    </location>
    <ligand>
        <name>ATP</name>
        <dbReference type="ChEBI" id="CHEBI:30616"/>
    </ligand>
</feature>
<feature type="binding site" evidence="1">
    <location>
        <position position="58"/>
    </location>
    <ligand>
        <name>ATP</name>
        <dbReference type="ChEBI" id="CHEBI:30616"/>
    </ligand>
</feature>
<feature type="binding site" evidence="1">
    <location>
        <position position="73"/>
    </location>
    <ligand>
        <name>UMP</name>
        <dbReference type="ChEBI" id="CHEBI:57865"/>
    </ligand>
</feature>
<feature type="binding site" evidence="1">
    <location>
        <begin position="134"/>
        <end position="141"/>
    </location>
    <ligand>
        <name>UMP</name>
        <dbReference type="ChEBI" id="CHEBI:57865"/>
    </ligand>
</feature>
<feature type="binding site" evidence="1">
    <location>
        <position position="161"/>
    </location>
    <ligand>
        <name>ATP</name>
        <dbReference type="ChEBI" id="CHEBI:30616"/>
    </ligand>
</feature>
<feature type="binding site" evidence="1">
    <location>
        <position position="167"/>
    </location>
    <ligand>
        <name>ATP</name>
        <dbReference type="ChEBI" id="CHEBI:30616"/>
    </ligand>
</feature>
<feature type="binding site" evidence="1">
    <location>
        <position position="170"/>
    </location>
    <ligand>
        <name>ATP</name>
        <dbReference type="ChEBI" id="CHEBI:30616"/>
    </ligand>
</feature>
<gene>
    <name evidence="1" type="primary">pyrH</name>
    <name type="ordered locus">BTH_I2029</name>
</gene>
<sequence>MSNAYKRVLLKLSGEALMGDDAFGINRATIERMVADIAEVVRLGTQLAVVIGGGNIFRGVAGGAAGMDRATADYMGMLATMMNALALQDAMRHAGIEARVQSALRMDQVVEPYIRPRAIRQLEEGKVVIFAAGTGNPFFTTDTAAALRGSEVGAEVVLKATKVDGVYSADPKKDPSATRYSSISFDEAIGRNLQVMDATAFALCRDQKLPIRVFSINKPGALKRIVQGEDEGTLVHV</sequence>